<evidence type="ECO:0000255" key="1"/>
<evidence type="ECO:0000305" key="2"/>
<comment type="subcellular location">
    <subcellularLocation>
        <location evidence="2">Membrane</location>
        <topology evidence="2">Single-pass membrane protein</topology>
    </subcellularLocation>
</comment>
<comment type="similarity">
    <text evidence="2">Belongs to the vacuolar ATPase subunit S1 family.</text>
</comment>
<proteinExistence type="evidence at transcript level"/>
<name>VAS1L_HUMAN</name>
<sequence>MRLWKARVLKLVLKTAKDSRLGLNSKWLSLKLGDAGNPRSLAIRFILTNYNKLSIQSWFSLRRVEIISNNSIQAVFNPTGVYAPSGYSYRCQRVGSLQQDQALLLPSDTDDGSSLWEVTFIDFQIQGFAIKGGRFTKAQDCASSFSPAFLIGLAMSLILLLVLAYALHMLIYLRYLDQQYDLIASPAHFSQLKARDTAEEKELLRSQGAECYKLRSQQISKIYV</sequence>
<feature type="chain" id="PRO_0000342377" description="V-type proton ATPase subunit S1-like protein">
    <location>
        <begin position="1"/>
        <end position="224"/>
    </location>
</feature>
<feature type="transmembrane region" description="Helical" evidence="1">
    <location>
        <begin position="147"/>
        <end position="167"/>
    </location>
</feature>
<accession>Q52LC2</accession>
<protein>
    <recommendedName>
        <fullName>V-type proton ATPase subunit S1-like protein</fullName>
    </recommendedName>
    <alternativeName>
        <fullName>Vacuolar proton pump subunit S1-like protein</fullName>
    </alternativeName>
</protein>
<reference key="1">
    <citation type="submission" date="2005-07" db="EMBL/GenBank/DDBJ databases">
        <authorList>
            <person name="Mural R.J."/>
            <person name="Istrail S."/>
            <person name="Sutton G.G."/>
            <person name="Florea L."/>
            <person name="Halpern A.L."/>
            <person name="Mobarry C.M."/>
            <person name="Lippert R."/>
            <person name="Walenz B."/>
            <person name="Shatkay H."/>
            <person name="Dew I."/>
            <person name="Miller J.R."/>
            <person name="Flanigan M.J."/>
            <person name="Edwards N.J."/>
            <person name="Bolanos R."/>
            <person name="Fasulo D."/>
            <person name="Halldorsson B.V."/>
            <person name="Hannenhalli S."/>
            <person name="Turner R."/>
            <person name="Yooseph S."/>
            <person name="Lu F."/>
            <person name="Nusskern D.R."/>
            <person name="Shue B.C."/>
            <person name="Zheng X.H."/>
            <person name="Zhong F."/>
            <person name="Delcher A.L."/>
            <person name="Huson D.H."/>
            <person name="Kravitz S.A."/>
            <person name="Mouchard L."/>
            <person name="Reinert K."/>
            <person name="Remington K.A."/>
            <person name="Clark A.G."/>
            <person name="Waterman M.S."/>
            <person name="Eichler E.E."/>
            <person name="Adams M.D."/>
            <person name="Hunkapiller M.W."/>
            <person name="Myers E.W."/>
            <person name="Venter J.C."/>
        </authorList>
    </citation>
    <scope>NUCLEOTIDE SEQUENCE [LARGE SCALE GENOMIC DNA]</scope>
</reference>
<reference key="2">
    <citation type="journal article" date="2004" name="Genome Res.">
        <title>The status, quality, and expansion of the NIH full-length cDNA project: the Mammalian Gene Collection (MGC).</title>
        <authorList>
            <consortium name="The MGC Project Team"/>
        </authorList>
    </citation>
    <scope>NUCLEOTIDE SEQUENCE [LARGE SCALE MRNA]</scope>
    <source>
        <tissue>Brain</tissue>
    </source>
</reference>
<keyword id="KW-0472">Membrane</keyword>
<keyword id="KW-1185">Reference proteome</keyword>
<keyword id="KW-0812">Transmembrane</keyword>
<keyword id="KW-1133">Transmembrane helix</keyword>
<organism>
    <name type="scientific">Homo sapiens</name>
    <name type="common">Human</name>
    <dbReference type="NCBI Taxonomy" id="9606"/>
    <lineage>
        <taxon>Eukaryota</taxon>
        <taxon>Metazoa</taxon>
        <taxon>Chordata</taxon>
        <taxon>Craniata</taxon>
        <taxon>Vertebrata</taxon>
        <taxon>Euteleostomi</taxon>
        <taxon>Mammalia</taxon>
        <taxon>Eutheria</taxon>
        <taxon>Euarchontoglires</taxon>
        <taxon>Primates</taxon>
        <taxon>Haplorrhini</taxon>
        <taxon>Catarrhini</taxon>
        <taxon>Hominidae</taxon>
        <taxon>Homo</taxon>
    </lineage>
</organism>
<gene>
    <name type="primary">ATP6AP1L</name>
</gene>
<dbReference type="EMBL" id="CH471084">
    <property type="protein sequence ID" value="EAW95889.1"/>
    <property type="molecule type" value="Genomic_DNA"/>
</dbReference>
<dbReference type="EMBL" id="BC093982">
    <property type="protein sequence ID" value="AAH93982.1"/>
    <property type="molecule type" value="mRNA"/>
</dbReference>
<dbReference type="EMBL" id="BC112191">
    <property type="protein sequence ID" value="AAI12192.1"/>
    <property type="molecule type" value="mRNA"/>
</dbReference>
<dbReference type="RefSeq" id="NP_001017971.1">
    <property type="nucleotide sequence ID" value="NM_001017971.2"/>
</dbReference>
<dbReference type="RefSeq" id="XP_011542025.1">
    <property type="nucleotide sequence ID" value="XM_011543723.2"/>
</dbReference>
<dbReference type="RefSeq" id="XP_016865530.1">
    <property type="nucleotide sequence ID" value="XM_017010041.1"/>
</dbReference>
<dbReference type="RefSeq" id="XP_016865531.1">
    <property type="nucleotide sequence ID" value="XM_017010042.1"/>
</dbReference>
<dbReference type="RefSeq" id="XP_016865532.1">
    <property type="nucleotide sequence ID" value="XM_017010043.1"/>
</dbReference>
<dbReference type="RefSeq" id="XP_016865533.1">
    <property type="nucleotide sequence ID" value="XM_017010044.1"/>
</dbReference>
<dbReference type="RefSeq" id="XP_016865534.1">
    <property type="nucleotide sequence ID" value="XM_017010045.1"/>
</dbReference>
<dbReference type="RefSeq" id="XP_016865535.1">
    <property type="nucleotide sequence ID" value="XM_017010046.1"/>
</dbReference>
<dbReference type="RefSeq" id="XP_016865536.1">
    <property type="nucleotide sequence ID" value="XM_017010047.1"/>
</dbReference>
<dbReference type="SMR" id="Q52LC2"/>
<dbReference type="FunCoup" id="Q52LC2">
    <property type="interactions" value="10"/>
</dbReference>
<dbReference type="STRING" id="9606.ENSP00000391381"/>
<dbReference type="iPTMnet" id="Q52LC2"/>
<dbReference type="PhosphoSitePlus" id="Q52LC2"/>
<dbReference type="BioMuta" id="ATP6AP1L"/>
<dbReference type="DMDM" id="74735800"/>
<dbReference type="MassIVE" id="Q52LC2"/>
<dbReference type="PaxDb" id="9606-ENSP00000369513"/>
<dbReference type="PeptideAtlas" id="Q52LC2"/>
<dbReference type="ProteomicsDB" id="62421"/>
<dbReference type="DNASU" id="92270"/>
<dbReference type="UCSC" id="uc003khv.5">
    <property type="organism name" value="human"/>
</dbReference>
<dbReference type="AGR" id="HGNC:28091"/>
<dbReference type="DisGeNET" id="92270"/>
<dbReference type="GeneCards" id="ATP6AP1L"/>
<dbReference type="HGNC" id="HGNC:28091">
    <property type="gene designation" value="ATP6AP1L"/>
</dbReference>
<dbReference type="neXtProt" id="NX_Q52LC2"/>
<dbReference type="PharmGKB" id="PA164716384"/>
<dbReference type="VEuPathDB" id="HostDB:ENSG00000205464"/>
<dbReference type="eggNOG" id="KOG3868">
    <property type="taxonomic scope" value="Eukaryota"/>
</dbReference>
<dbReference type="HOGENOM" id="CLU_071317_1_0_1"/>
<dbReference type="InParanoid" id="Q52LC2"/>
<dbReference type="OMA" id="WFSLHQV"/>
<dbReference type="PAN-GO" id="Q52LC2">
    <property type="GO annotations" value="2 GO annotations based on evolutionary models"/>
</dbReference>
<dbReference type="PhylomeDB" id="Q52LC2"/>
<dbReference type="TreeFam" id="TF325819"/>
<dbReference type="PathwayCommons" id="Q52LC2"/>
<dbReference type="SignaLink" id="Q52LC2"/>
<dbReference type="BioGRID-ORCS" id="92270">
    <property type="hits" value="19 hits in 1150 CRISPR screens"/>
</dbReference>
<dbReference type="ChiTaRS" id="ATP6AP1L">
    <property type="organism name" value="human"/>
</dbReference>
<dbReference type="GenomeRNAi" id="92270"/>
<dbReference type="Pharos" id="Q52LC2">
    <property type="development level" value="Tdark"/>
</dbReference>
<dbReference type="PRO" id="PR:Q52LC2"/>
<dbReference type="Proteomes" id="UP000005640">
    <property type="component" value="Chromosome 5"/>
</dbReference>
<dbReference type="RNAct" id="Q52LC2">
    <property type="molecule type" value="protein"/>
</dbReference>
<dbReference type="GO" id="GO:0016020">
    <property type="term" value="C:membrane"/>
    <property type="evidence" value="ECO:0007669"/>
    <property type="project" value="UniProtKB-SubCell"/>
</dbReference>
<dbReference type="FunFam" id="2.40.160.110:FF:000003">
    <property type="entry name" value="ATPase H+ transporting accessory protein 1"/>
    <property type="match status" value="1"/>
</dbReference>
<dbReference type="Gene3D" id="2.40.160.110">
    <property type="match status" value="1"/>
</dbReference>
<dbReference type="InterPro" id="IPR008388">
    <property type="entry name" value="Ac45_acc_su"/>
</dbReference>
<dbReference type="InterPro" id="IPR046756">
    <property type="entry name" value="VAS1/VOA1_TM"/>
</dbReference>
<dbReference type="InterPro" id="IPR046755">
    <property type="entry name" value="VAS1_LD"/>
</dbReference>
<dbReference type="PANTHER" id="PTHR12471:SF3">
    <property type="entry name" value="ATPASE, H+ TRANSPORTING, LYSOSOMAL ACCESSORY PROTEIN 1-LIKE"/>
    <property type="match status" value="1"/>
</dbReference>
<dbReference type="PANTHER" id="PTHR12471">
    <property type="entry name" value="VACUOLAR ATP SYNTHASE SUBUNIT S1"/>
    <property type="match status" value="1"/>
</dbReference>
<dbReference type="Pfam" id="PF20520">
    <property type="entry name" value="Ac45-VOA1_TM"/>
    <property type="match status" value="1"/>
</dbReference>
<dbReference type="Pfam" id="PF05827">
    <property type="entry name" value="VAS1_LD"/>
    <property type="match status" value="1"/>
</dbReference>